<evidence type="ECO:0000250" key="1"/>
<evidence type="ECO:0000255" key="2"/>
<evidence type="ECO:0000305" key="3"/>
<name>MNHG2_STAES</name>
<protein>
    <recommendedName>
        <fullName>Putative antiporter subunit mnhG2</fullName>
    </recommendedName>
    <alternativeName>
        <fullName>Mrp complex subunit G2</fullName>
    </alternativeName>
    <alternativeName>
        <fullName>Putative NADH-ubiquinone oxidoreductase subunit mnhF2</fullName>
    </alternativeName>
</protein>
<comment type="subunit">
    <text evidence="1">May form a heterooligomeric complex that consists of seven subunits: mnhA2, mnhB2, mnhC2, mnhD2, mnhE2, mnhF2 and mnhG2.</text>
</comment>
<comment type="subcellular location">
    <subcellularLocation>
        <location evidence="3">Cell membrane</location>
        <topology evidence="3">Multi-pass membrane protein</topology>
    </subcellularLocation>
</comment>
<comment type="similarity">
    <text evidence="3">Belongs to the CPA3 antiporters (TC 2.A.63) subunit G family.</text>
</comment>
<dbReference type="EMBL" id="AE015929">
    <property type="protein sequence ID" value="AAO04000.1"/>
    <property type="molecule type" value="Genomic_DNA"/>
</dbReference>
<dbReference type="RefSeq" id="NP_763958.1">
    <property type="nucleotide sequence ID" value="NC_004461.1"/>
</dbReference>
<dbReference type="RefSeq" id="WP_001832099.1">
    <property type="nucleotide sequence ID" value="NZ_WBME01000020.1"/>
</dbReference>
<dbReference type="SMR" id="Q8CTM8"/>
<dbReference type="GeneID" id="50019440"/>
<dbReference type="KEGG" id="sep:SE_0403"/>
<dbReference type="PATRIC" id="fig|176280.10.peg.377"/>
<dbReference type="eggNOG" id="COG1320">
    <property type="taxonomic scope" value="Bacteria"/>
</dbReference>
<dbReference type="HOGENOM" id="CLU_121334_0_3_9"/>
<dbReference type="OrthoDB" id="9806575at2"/>
<dbReference type="Proteomes" id="UP000001411">
    <property type="component" value="Chromosome"/>
</dbReference>
<dbReference type="GO" id="GO:0005886">
    <property type="term" value="C:plasma membrane"/>
    <property type="evidence" value="ECO:0007669"/>
    <property type="project" value="UniProtKB-SubCell"/>
</dbReference>
<dbReference type="GO" id="GO:0015385">
    <property type="term" value="F:sodium:proton antiporter activity"/>
    <property type="evidence" value="ECO:0007669"/>
    <property type="project" value="TreeGrafter"/>
</dbReference>
<dbReference type="InterPro" id="IPR005133">
    <property type="entry name" value="PhaG_MnhG_YufB"/>
</dbReference>
<dbReference type="NCBIfam" id="TIGR01300">
    <property type="entry name" value="CPA3_mnhG_phaG"/>
    <property type="match status" value="1"/>
</dbReference>
<dbReference type="NCBIfam" id="NF009236">
    <property type="entry name" value="PRK12586.1"/>
    <property type="match status" value="1"/>
</dbReference>
<dbReference type="PANTHER" id="PTHR34703">
    <property type="entry name" value="ANTIPORTER SUBUNIT MNHG2-RELATED"/>
    <property type="match status" value="1"/>
</dbReference>
<dbReference type="PANTHER" id="PTHR34703:SF1">
    <property type="entry name" value="ANTIPORTER SUBUNIT MNHG2-RELATED"/>
    <property type="match status" value="1"/>
</dbReference>
<dbReference type="Pfam" id="PF03334">
    <property type="entry name" value="PhaG_MnhG_YufB"/>
    <property type="match status" value="1"/>
</dbReference>
<keyword id="KW-0050">Antiport</keyword>
<keyword id="KW-1003">Cell membrane</keyword>
<keyword id="KW-0406">Ion transport</keyword>
<keyword id="KW-0472">Membrane</keyword>
<keyword id="KW-0812">Transmembrane</keyword>
<keyword id="KW-1133">Transmembrane helix</keyword>
<keyword id="KW-0813">Transport</keyword>
<feature type="chain" id="PRO_0000372186" description="Putative antiporter subunit mnhG2">
    <location>
        <begin position="1"/>
        <end position="154"/>
    </location>
</feature>
<feature type="transmembrane region" description="Helical" evidence="2">
    <location>
        <begin position="11"/>
        <end position="31"/>
    </location>
</feature>
<feature type="transmembrane region" description="Helical" evidence="2">
    <location>
        <begin position="51"/>
        <end position="71"/>
    </location>
</feature>
<feature type="transmembrane region" description="Helical" evidence="2">
    <location>
        <begin position="72"/>
        <end position="92"/>
    </location>
</feature>
<organism>
    <name type="scientific">Staphylococcus epidermidis (strain ATCC 12228 / FDA PCI 1200)</name>
    <dbReference type="NCBI Taxonomy" id="176280"/>
    <lineage>
        <taxon>Bacteria</taxon>
        <taxon>Bacillati</taxon>
        <taxon>Bacillota</taxon>
        <taxon>Bacilli</taxon>
        <taxon>Bacillales</taxon>
        <taxon>Staphylococcaceae</taxon>
        <taxon>Staphylococcus</taxon>
    </lineage>
</organism>
<gene>
    <name type="primary">mnhG2</name>
    <name type="synonym">mrpG2</name>
    <name type="ordered locus">SE_0403</name>
</gene>
<proteinExistence type="inferred from homology"/>
<accession>Q8CTM8</accession>
<reference key="1">
    <citation type="journal article" date="2003" name="Mol. Microbiol.">
        <title>Genome-based analysis of virulence genes in a non-biofilm-forming Staphylococcus epidermidis strain (ATCC 12228).</title>
        <authorList>
            <person name="Zhang Y.-Q."/>
            <person name="Ren S.-X."/>
            <person name="Li H.-L."/>
            <person name="Wang Y.-X."/>
            <person name="Fu G."/>
            <person name="Yang J."/>
            <person name="Qin Z.-Q."/>
            <person name="Miao Y.-G."/>
            <person name="Wang W.-Y."/>
            <person name="Chen R.-S."/>
            <person name="Shen Y."/>
            <person name="Chen Z."/>
            <person name="Yuan Z.-H."/>
            <person name="Zhao G.-P."/>
            <person name="Qu D."/>
            <person name="Danchin A."/>
            <person name="Wen Y.-M."/>
        </authorList>
    </citation>
    <scope>NUCLEOTIDE SEQUENCE [LARGE SCALE GENOMIC DNA]</scope>
    <source>
        <strain>ATCC 12228 / FDA PCI 1200</strain>
    </source>
</reference>
<sequence length="154" mass="17585">MEIIKDIVSLIASILIFLGSIIALISAIGIVKFQDVFLRSHASTKSSTLSVLLTVVGVLIYFIVNSGFFSVRLLLSLVFINLTSPVGMHLISRAAYRNGAYMYRKDDASRQSTILLSQKEFNTPEELKKRAKLREERREKLYYKEKEYINKMDD</sequence>